<keyword id="KW-1015">Disulfide bond</keyword>
<keyword id="KW-0646">Protease inhibitor</keyword>
<keyword id="KW-0964">Secreted</keyword>
<keyword id="KW-0722">Serine protease inhibitor</keyword>
<keyword id="KW-0732">Signal</keyword>
<comment type="function">
    <text evidence="1">Serine protease inhibitor (By similarity). Does not inhibit plasmin, and does not reduce blood loss in the mouse tail vein blood loss model.</text>
</comment>
<comment type="subcellular location">
    <subcellularLocation>
        <location evidence="1">Secreted</location>
    </subcellularLocation>
</comment>
<comment type="tissue specificity">
    <text>Expressed by the venom gland.</text>
</comment>
<comment type="similarity">
    <text evidence="5">Belongs to the venom Kunitz-type family.</text>
</comment>
<name>VKT6_PSETT</name>
<dbReference type="EMBL" id="AF402329">
    <property type="protein sequence ID" value="AAK95348.1"/>
    <property type="molecule type" value="mRNA"/>
</dbReference>
<dbReference type="SMR" id="Q90W96"/>
<dbReference type="MEROPS" id="I02.052"/>
<dbReference type="GO" id="GO:0005576">
    <property type="term" value="C:extracellular region"/>
    <property type="evidence" value="ECO:0007669"/>
    <property type="project" value="UniProtKB-SubCell"/>
</dbReference>
<dbReference type="GO" id="GO:0004867">
    <property type="term" value="F:serine-type endopeptidase inhibitor activity"/>
    <property type="evidence" value="ECO:0007669"/>
    <property type="project" value="UniProtKB-KW"/>
</dbReference>
<dbReference type="CDD" id="cd22594">
    <property type="entry name" value="Kunitz_textilinin-like"/>
    <property type="match status" value="1"/>
</dbReference>
<dbReference type="FunFam" id="4.10.410.10:FF:000020">
    <property type="entry name" value="Collagen, type VI, alpha 3"/>
    <property type="match status" value="1"/>
</dbReference>
<dbReference type="Gene3D" id="4.10.410.10">
    <property type="entry name" value="Pancreatic trypsin inhibitor Kunitz domain"/>
    <property type="match status" value="1"/>
</dbReference>
<dbReference type="InterPro" id="IPR002223">
    <property type="entry name" value="Kunitz_BPTI"/>
</dbReference>
<dbReference type="InterPro" id="IPR036880">
    <property type="entry name" value="Kunitz_BPTI_sf"/>
</dbReference>
<dbReference type="InterPro" id="IPR020901">
    <property type="entry name" value="Prtase_inh_Kunz-CS"/>
</dbReference>
<dbReference type="InterPro" id="IPR050098">
    <property type="entry name" value="TFPI/VKTCI-like"/>
</dbReference>
<dbReference type="PANTHER" id="PTHR10083">
    <property type="entry name" value="KUNITZ-TYPE PROTEASE INHIBITOR-RELATED"/>
    <property type="match status" value="1"/>
</dbReference>
<dbReference type="Pfam" id="PF00014">
    <property type="entry name" value="Kunitz_BPTI"/>
    <property type="match status" value="1"/>
</dbReference>
<dbReference type="PRINTS" id="PR00759">
    <property type="entry name" value="BASICPTASE"/>
</dbReference>
<dbReference type="SMART" id="SM00131">
    <property type="entry name" value="KU"/>
    <property type="match status" value="1"/>
</dbReference>
<dbReference type="SUPFAM" id="SSF57362">
    <property type="entry name" value="BPTI-like"/>
    <property type="match status" value="1"/>
</dbReference>
<dbReference type="PROSITE" id="PS00280">
    <property type="entry name" value="BPTI_KUNITZ_1"/>
    <property type="match status" value="1"/>
</dbReference>
<dbReference type="PROSITE" id="PS50279">
    <property type="entry name" value="BPTI_KUNITZ_2"/>
    <property type="match status" value="1"/>
</dbReference>
<sequence>MSSGGLLLLLGLLTLWEVLTPVSSKDRPKFCELPADIGPCDDFTGAFHYSPREHECIEFIYGGCKGNANNFNTQEECESTCAA</sequence>
<evidence type="ECO:0000250" key="1"/>
<evidence type="ECO:0000255" key="2"/>
<evidence type="ECO:0000255" key="3">
    <source>
        <dbReference type="PROSITE-ProRule" id="PRU00031"/>
    </source>
</evidence>
<evidence type="ECO:0000303" key="4">
    <source>
    </source>
</evidence>
<evidence type="ECO:0000305" key="5"/>
<proteinExistence type="evidence at transcript level"/>
<reference key="1">
    <citation type="journal article" date="2002" name="Br. J. Haematol.">
        <title>A family of textilinin genes, two of which encode proteins with antihaemorrhagic properties.</title>
        <authorList>
            <person name="Filippovich I."/>
            <person name="Sorokina N."/>
            <person name="Masci P.P."/>
            <person name="de Jersey J."/>
            <person name="Whitaker A.N."/>
            <person name="Winzor D.J."/>
            <person name="Gaffney P.J."/>
            <person name="Lavin M.F."/>
        </authorList>
    </citation>
    <scope>NUCLEOTIDE SEQUENCE [MRNA]</scope>
    <source>
        <tissue>Venom gland</tissue>
    </source>
</reference>
<organism>
    <name type="scientific">Pseudonaja textilis textilis</name>
    <name type="common">Eastern brown snake</name>
    <dbReference type="NCBI Taxonomy" id="169397"/>
    <lineage>
        <taxon>Eukaryota</taxon>
        <taxon>Metazoa</taxon>
        <taxon>Chordata</taxon>
        <taxon>Craniata</taxon>
        <taxon>Vertebrata</taxon>
        <taxon>Euteleostomi</taxon>
        <taxon>Lepidosauria</taxon>
        <taxon>Squamata</taxon>
        <taxon>Bifurcata</taxon>
        <taxon>Unidentata</taxon>
        <taxon>Episquamata</taxon>
        <taxon>Toxicofera</taxon>
        <taxon>Serpentes</taxon>
        <taxon>Colubroidea</taxon>
        <taxon>Elapidae</taxon>
        <taxon>Hydrophiinae</taxon>
        <taxon>Pseudonaja</taxon>
    </lineage>
</organism>
<accession>Q90W96</accession>
<feature type="signal peptide" evidence="2">
    <location>
        <begin position="1"/>
        <end position="24"/>
    </location>
</feature>
<feature type="chain" id="PRO_0000377478" description="Kunitz-type serine protease inhibitor textilinin-6">
    <location>
        <begin position="25"/>
        <end position="83"/>
    </location>
</feature>
<feature type="domain" description="BPTI/Kunitz inhibitor" evidence="3">
    <location>
        <begin position="31"/>
        <end position="81"/>
    </location>
</feature>
<feature type="disulfide bond" evidence="3">
    <location>
        <begin position="31"/>
        <end position="81"/>
    </location>
</feature>
<feature type="disulfide bond" evidence="3">
    <location>
        <begin position="40"/>
        <end position="64"/>
    </location>
</feature>
<feature type="disulfide bond" evidence="3">
    <location>
        <begin position="56"/>
        <end position="77"/>
    </location>
</feature>
<protein>
    <recommendedName>
        <fullName evidence="4">Kunitz-type serine protease inhibitor textilinin-6</fullName>
        <shortName evidence="4">Txln-6</shortName>
    </recommendedName>
</protein>